<proteinExistence type="inferred from homology"/>
<protein>
    <recommendedName>
        <fullName evidence="1">Protein translocase subunit SecY</fullName>
    </recommendedName>
</protein>
<comment type="function">
    <text evidence="1">The central subunit of the protein translocation channel SecYEG. Consists of two halves formed by TMs 1-5 and 6-10. These two domains form a lateral gate at the front which open onto the bilayer between TMs 2 and 7, and are clamped together by SecE at the back. The channel is closed by both a pore ring composed of hydrophobic SecY resides and a short helix (helix 2A) on the extracellular side of the membrane which forms a plug. The plug probably moves laterally to allow the channel to open. The ring and the pore may move independently.</text>
</comment>
<comment type="subunit">
    <text evidence="1">Component of the Sec protein translocase complex. Heterotrimer consisting of SecY, SecE and SecG subunits. The heterotrimers can form oligomers, although 1 heterotrimer is thought to be able to translocate proteins. Interacts with the ribosome. Interacts with SecDF, and other proteins may be involved. Interacts with SecA.</text>
</comment>
<comment type="subcellular location">
    <subcellularLocation>
        <location evidence="1">Cell membrane</location>
        <topology evidence="1">Multi-pass membrane protein</topology>
    </subcellularLocation>
</comment>
<comment type="similarity">
    <text evidence="1">Belongs to the SecY/SEC61-alpha family.</text>
</comment>
<feature type="chain" id="PRO_0000131734" description="Protein translocase subunit SecY">
    <location>
        <begin position="1"/>
        <end position="498"/>
    </location>
</feature>
<feature type="transmembrane region" description="Helical" evidence="1">
    <location>
        <begin position="23"/>
        <end position="43"/>
    </location>
</feature>
<feature type="transmembrane region" description="Helical" evidence="1">
    <location>
        <begin position="65"/>
        <end position="87"/>
    </location>
</feature>
<feature type="transmembrane region" description="Helical" evidence="1">
    <location>
        <begin position="124"/>
        <end position="144"/>
    </location>
</feature>
<feature type="transmembrane region" description="Helical" evidence="1">
    <location>
        <begin position="163"/>
        <end position="183"/>
    </location>
</feature>
<feature type="transmembrane region" description="Helical" evidence="1">
    <location>
        <begin position="191"/>
        <end position="211"/>
    </location>
</feature>
<feature type="transmembrane region" description="Helical" evidence="1">
    <location>
        <begin position="229"/>
        <end position="249"/>
    </location>
</feature>
<feature type="transmembrane region" description="Helical" evidence="1">
    <location>
        <begin position="281"/>
        <end position="301"/>
    </location>
</feature>
<feature type="transmembrane region" description="Helical" evidence="1">
    <location>
        <begin position="322"/>
        <end position="342"/>
    </location>
</feature>
<feature type="transmembrane region" description="Helical" evidence="1">
    <location>
        <begin position="382"/>
        <end position="402"/>
    </location>
</feature>
<feature type="transmembrane region" description="Helical" evidence="1">
    <location>
        <begin position="406"/>
        <end position="426"/>
    </location>
</feature>
<feature type="region of interest" description="Disordered" evidence="2">
    <location>
        <begin position="478"/>
        <end position="498"/>
    </location>
</feature>
<feature type="compositionally biased region" description="Basic and acidic residues" evidence="2">
    <location>
        <begin position="478"/>
        <end position="488"/>
    </location>
</feature>
<feature type="sequence conflict" description="In Ref. 1; AAB95406." evidence="3" ref="1">
    <original>K</original>
    <variation>R</variation>
    <location>
        <position position="13"/>
    </location>
</feature>
<feature type="sequence conflict" description="In Ref. 1; AAB95406." evidence="3" ref="1">
    <original>S</original>
    <variation>T</variation>
    <location>
        <position position="247"/>
    </location>
</feature>
<feature type="sequence conflict" description="In Ref. 1; AAB95406." evidence="3" ref="1">
    <original>I</original>
    <variation>V</variation>
    <location>
        <position position="330"/>
    </location>
</feature>
<feature type="sequence conflict" description="In Ref. 1; AAB95406." evidence="3" ref="1">
    <original>A</original>
    <variation>V</variation>
    <location>
        <position position="451"/>
    </location>
</feature>
<feature type="sequence conflict" description="In Ref. 1; AAB95406." evidence="3" ref="1">
    <original>Q</original>
    <variation>K</variation>
    <location>
        <position position="474"/>
    </location>
</feature>
<feature type="sequence conflict" description="In Ref. 1; AAB95406." evidence="3" ref="1">
    <original>D</original>
    <variation>N</variation>
    <location>
        <position position="490"/>
    </location>
</feature>
<sequence length="498" mass="55045">MAKTNSKNLLGQKIIKLLRNRDFVISVFVTLFLILLFRVISVIPLPGITISQNKNNLNNGVSDFFDLFNLLGGGGLSQLSLFAVGISPYISAQIIMQLLSTDLIPPLSKLAKSGELGRRRIELITRFVTLPFAVVQAFAIIALINNQRNGAIRFENGGILHQAFYIVTMTAGTYIGIFIGDIISKKGVGNGITLLILSGILARLPDGFIVMYRVLGGVIISTNPILTSAINFSLYFLAFLVLLLAISFVNSSTRRIPIQQTGEGMVLGNEKLPYLPIKLNAAGVIPVIFASSIMSIPITIAEFQPQSEARWFVEDYLSLRTPVGISLYVILIIIFTFFYSYIQINPEQLAENFNKSHKFIPGVRPGLDTEKHITKVLMRINFIGAPFLAIVAVIPYIISLVLNVPTTLSLGGTGIIIMVSASMELYRSLRSAATTTSYQRLRKDIANRIEAELSLNDYMNKPNLEHDQYGLLGQHKKVEPTQDKKKNPSDPLEVSQLW</sequence>
<name>SECY_MYCGA</name>
<accession>O52351</accession>
<organism>
    <name type="scientific">Mycoplasmoides gallisepticum (strain R(low / passage 15 / clone 2))</name>
    <name type="common">Mycoplasma gallisepticum</name>
    <dbReference type="NCBI Taxonomy" id="710127"/>
    <lineage>
        <taxon>Bacteria</taxon>
        <taxon>Bacillati</taxon>
        <taxon>Mycoplasmatota</taxon>
        <taxon>Mycoplasmoidales</taxon>
        <taxon>Mycoplasmoidaceae</taxon>
        <taxon>Mycoplasmoides</taxon>
    </lineage>
</organism>
<evidence type="ECO:0000255" key="1">
    <source>
        <dbReference type="HAMAP-Rule" id="MF_01465"/>
    </source>
</evidence>
<evidence type="ECO:0000256" key="2">
    <source>
        <dbReference type="SAM" id="MobiDB-lite"/>
    </source>
</evidence>
<evidence type="ECO:0000305" key="3"/>
<gene>
    <name evidence="1" type="primary">secY</name>
    <name type="synonym">recY</name>
    <name type="ordered locus">MYCGA0700</name>
    <name type="ORF">MGA_0740</name>
</gene>
<reference key="1">
    <citation type="journal article" date="2000" name="Mol. Biol. (Mosk.)">
        <title>Determination and analysis of the nucleotide sequence of a segment of a Mycoplasma gallisepticum strain A5969 chromosome, containing operons S10 and rrn23-5.</title>
        <authorList>
            <person name="Skamrov A.V."/>
            <person name="Gol'dman M.A."/>
            <person name="Feoktistova E.S."/>
            <person name="Bibilashvili R.S."/>
        </authorList>
    </citation>
    <scope>NUCLEOTIDE SEQUENCE [GENOMIC DNA]</scope>
    <source>
        <strain>A5969Var.B</strain>
    </source>
</reference>
<reference key="2">
    <citation type="journal article" date="2003" name="Microbiology">
        <title>The complete genome sequence of the avian pathogen Mycoplasma gallisepticum strain R(low).</title>
        <authorList>
            <person name="Papazisi L."/>
            <person name="Gorton T.S."/>
            <person name="Kutish G."/>
            <person name="Markham P.F."/>
            <person name="Browning G.F."/>
            <person name="Nguyen D.K."/>
            <person name="Swartzell S."/>
            <person name="Madan A."/>
            <person name="Mahairas G."/>
            <person name="Geary S.J."/>
        </authorList>
    </citation>
    <scope>NUCLEOTIDE SEQUENCE [LARGE SCALE GENOMIC DNA]</scope>
    <source>
        <strain>R(low / passage 15 / clone 2)</strain>
    </source>
</reference>
<dbReference type="EMBL" id="AF036708">
    <property type="protein sequence ID" value="AAB95406.1"/>
    <property type="molecule type" value="Genomic_DNA"/>
</dbReference>
<dbReference type="EMBL" id="AE015450">
    <property type="protein sequence ID" value="AAP56420.1"/>
    <property type="molecule type" value="Genomic_DNA"/>
</dbReference>
<dbReference type="RefSeq" id="WP_011113299.1">
    <property type="nucleotide sequence ID" value="NC_004829.2"/>
</dbReference>
<dbReference type="SMR" id="O52351"/>
<dbReference type="GeneID" id="93509888"/>
<dbReference type="KEGG" id="mga:MGA_0740"/>
<dbReference type="HOGENOM" id="CLU_030313_0_1_14"/>
<dbReference type="OrthoDB" id="9809248at2"/>
<dbReference type="Proteomes" id="UP000001418">
    <property type="component" value="Chromosome"/>
</dbReference>
<dbReference type="GO" id="GO:0005886">
    <property type="term" value="C:plasma membrane"/>
    <property type="evidence" value="ECO:0007669"/>
    <property type="project" value="UniProtKB-SubCell"/>
</dbReference>
<dbReference type="GO" id="GO:0065002">
    <property type="term" value="P:intracellular protein transmembrane transport"/>
    <property type="evidence" value="ECO:0007669"/>
    <property type="project" value="UniProtKB-UniRule"/>
</dbReference>
<dbReference type="GO" id="GO:0006605">
    <property type="term" value="P:protein targeting"/>
    <property type="evidence" value="ECO:0007669"/>
    <property type="project" value="UniProtKB-UniRule"/>
</dbReference>
<dbReference type="GO" id="GO:0043952">
    <property type="term" value="P:protein transport by the Sec complex"/>
    <property type="evidence" value="ECO:0007669"/>
    <property type="project" value="UniProtKB-UniRule"/>
</dbReference>
<dbReference type="FunFam" id="1.10.3370.10:FF:000001">
    <property type="entry name" value="Preprotein translocase subunit SecY"/>
    <property type="match status" value="1"/>
</dbReference>
<dbReference type="Gene3D" id="1.10.3370.10">
    <property type="entry name" value="SecY subunit domain"/>
    <property type="match status" value="1"/>
</dbReference>
<dbReference type="HAMAP" id="MF_01465">
    <property type="entry name" value="SecY"/>
    <property type="match status" value="1"/>
</dbReference>
<dbReference type="InterPro" id="IPR026593">
    <property type="entry name" value="SecY"/>
</dbReference>
<dbReference type="InterPro" id="IPR002208">
    <property type="entry name" value="SecY/SEC61-alpha"/>
</dbReference>
<dbReference type="InterPro" id="IPR030659">
    <property type="entry name" value="SecY_CS"/>
</dbReference>
<dbReference type="InterPro" id="IPR023201">
    <property type="entry name" value="SecY_dom_sf"/>
</dbReference>
<dbReference type="NCBIfam" id="TIGR00967">
    <property type="entry name" value="3a0501s007"/>
    <property type="match status" value="1"/>
</dbReference>
<dbReference type="PANTHER" id="PTHR10906">
    <property type="entry name" value="SECY/SEC61-ALPHA FAMILY MEMBER"/>
    <property type="match status" value="1"/>
</dbReference>
<dbReference type="Pfam" id="PF00344">
    <property type="entry name" value="SecY"/>
    <property type="match status" value="1"/>
</dbReference>
<dbReference type="PIRSF" id="PIRSF004557">
    <property type="entry name" value="SecY"/>
    <property type="match status" value="1"/>
</dbReference>
<dbReference type="PRINTS" id="PR00303">
    <property type="entry name" value="SECYTRNLCASE"/>
</dbReference>
<dbReference type="SUPFAM" id="SSF103491">
    <property type="entry name" value="Preprotein translocase SecY subunit"/>
    <property type="match status" value="1"/>
</dbReference>
<dbReference type="PROSITE" id="PS00755">
    <property type="entry name" value="SECY_1"/>
    <property type="match status" value="1"/>
</dbReference>
<dbReference type="PROSITE" id="PS00756">
    <property type="entry name" value="SECY_2"/>
    <property type="match status" value="1"/>
</dbReference>
<keyword id="KW-1003">Cell membrane</keyword>
<keyword id="KW-0472">Membrane</keyword>
<keyword id="KW-0653">Protein transport</keyword>
<keyword id="KW-1185">Reference proteome</keyword>
<keyword id="KW-0811">Translocation</keyword>
<keyword id="KW-0812">Transmembrane</keyword>
<keyword id="KW-1133">Transmembrane helix</keyword>
<keyword id="KW-0813">Transport</keyword>